<evidence type="ECO:0000255" key="1"/>
<evidence type="ECO:0000256" key="2">
    <source>
        <dbReference type="SAM" id="MobiDB-lite"/>
    </source>
</evidence>
<evidence type="ECO:0000269" key="3">
    <source>
    </source>
</evidence>
<evidence type="ECO:0000269" key="4">
    <source>
    </source>
</evidence>
<evidence type="ECO:0000269" key="5">
    <source>
    </source>
</evidence>
<evidence type="ECO:0000269" key="6">
    <source>
    </source>
</evidence>
<evidence type="ECO:0000269" key="7">
    <source>
    </source>
</evidence>
<evidence type="ECO:0000269" key="8">
    <source>
    </source>
</evidence>
<evidence type="ECO:0000269" key="9">
    <source>
    </source>
</evidence>
<evidence type="ECO:0000269" key="10">
    <source>
    </source>
</evidence>
<evidence type="ECO:0000269" key="11">
    <source>
    </source>
</evidence>
<evidence type="ECO:0000269" key="12">
    <source>
    </source>
</evidence>
<evidence type="ECO:0000303" key="13">
    <source>
    </source>
</evidence>
<evidence type="ECO:0000305" key="14"/>
<evidence type="ECO:0000305" key="15">
    <source>
    </source>
</evidence>
<evidence type="ECO:0000312" key="16">
    <source>
        <dbReference type="Proteomes" id="UP000001940"/>
    </source>
</evidence>
<evidence type="ECO:0000312" key="17">
    <source>
        <dbReference type="WormBase" id="F41E6.13a"/>
    </source>
</evidence>
<evidence type="ECO:0000312" key="18">
    <source>
        <dbReference type="WormBase" id="F41E6.13b"/>
    </source>
</evidence>
<organism evidence="16">
    <name type="scientific">Caenorhabditis elegans</name>
    <dbReference type="NCBI Taxonomy" id="6239"/>
    <lineage>
        <taxon>Eukaryota</taxon>
        <taxon>Metazoa</taxon>
        <taxon>Ecdysozoa</taxon>
        <taxon>Nematoda</taxon>
        <taxon>Chromadorea</taxon>
        <taxon>Rhabditida</taxon>
        <taxon>Rhabditina</taxon>
        <taxon>Rhabditomorpha</taxon>
        <taxon>Rhabditoidea</taxon>
        <taxon>Rhabditidae</taxon>
        <taxon>Peloderinae</taxon>
        <taxon>Caenorhabditis</taxon>
    </lineage>
</organism>
<dbReference type="EMBL" id="BX284605">
    <property type="protein sequence ID" value="CCD64090.1"/>
    <property type="molecule type" value="Genomic_DNA"/>
</dbReference>
<dbReference type="EMBL" id="BX284605">
    <property type="protein sequence ID" value="CCD64091.1"/>
    <property type="molecule type" value="Genomic_DNA"/>
</dbReference>
<dbReference type="PIR" id="T31883">
    <property type="entry name" value="T31883"/>
</dbReference>
<dbReference type="RefSeq" id="NP_741576.1">
    <molecule id="O16466-1"/>
    <property type="nucleotide sequence ID" value="NM_171491.5"/>
</dbReference>
<dbReference type="RefSeq" id="NP_741577.1">
    <molecule id="O16466-2"/>
    <property type="nucleotide sequence ID" value="NM_171492.6"/>
</dbReference>
<dbReference type="SMR" id="O16466"/>
<dbReference type="FunCoup" id="O16466">
    <property type="interactions" value="3253"/>
</dbReference>
<dbReference type="STRING" id="6239.F41E6.13a.1"/>
<dbReference type="PaxDb" id="6239-F41E6.13a"/>
<dbReference type="EnsemblMetazoa" id="F41E6.13a.1">
    <molecule id="O16466-1"/>
    <property type="protein sequence ID" value="F41E6.13a.1"/>
    <property type="gene ID" value="WBGene00018294"/>
</dbReference>
<dbReference type="EnsemblMetazoa" id="F41E6.13b.1">
    <molecule id="O16466-2"/>
    <property type="protein sequence ID" value="F41E6.13b.1"/>
    <property type="gene ID" value="WBGene00018294"/>
</dbReference>
<dbReference type="GeneID" id="179246"/>
<dbReference type="KEGG" id="cel:CELE_F41E6.13"/>
<dbReference type="AGR" id="WB:WBGene00018294"/>
<dbReference type="CTD" id="179246"/>
<dbReference type="WormBase" id="F41E6.13a">
    <molecule id="O16466-1"/>
    <property type="protein sequence ID" value="CE10268"/>
    <property type="gene ID" value="WBGene00018294"/>
    <property type="gene designation" value="atg-18"/>
</dbReference>
<dbReference type="WormBase" id="F41E6.13b">
    <molecule id="O16466-2"/>
    <property type="protein sequence ID" value="CE30784"/>
    <property type="gene ID" value="WBGene00018294"/>
    <property type="gene designation" value="atg-18"/>
</dbReference>
<dbReference type="eggNOG" id="KOG2110">
    <property type="taxonomic scope" value="Eukaryota"/>
</dbReference>
<dbReference type="GeneTree" id="ENSGT00940000167852"/>
<dbReference type="HOGENOM" id="CLU_025895_1_1_1"/>
<dbReference type="InParanoid" id="O16466"/>
<dbReference type="OMA" id="ATWGGMF"/>
<dbReference type="OrthoDB" id="1667587at2759"/>
<dbReference type="PhylomeDB" id="O16466"/>
<dbReference type="Reactome" id="R-CEL-1632852">
    <property type="pathway name" value="Macroautophagy"/>
</dbReference>
<dbReference type="PRO" id="PR:O16466"/>
<dbReference type="Proteomes" id="UP000001940">
    <property type="component" value="Chromosome V"/>
</dbReference>
<dbReference type="Bgee" id="WBGene00018294">
    <property type="expression patterns" value="Expressed in pharyngeal muscle cell (C elegans) and 4 other cell types or tissues"/>
</dbReference>
<dbReference type="GO" id="GO:0005737">
    <property type="term" value="C:cytoplasm"/>
    <property type="evidence" value="ECO:0000314"/>
    <property type="project" value="UniProtKB"/>
</dbReference>
<dbReference type="GO" id="GO:0005829">
    <property type="term" value="C:cytosol"/>
    <property type="evidence" value="ECO:0000318"/>
    <property type="project" value="GO_Central"/>
</dbReference>
<dbReference type="GO" id="GO:0045335">
    <property type="term" value="C:phagocytic vesicle"/>
    <property type="evidence" value="ECO:0000314"/>
    <property type="project" value="WormBase"/>
</dbReference>
<dbReference type="GO" id="GO:0030670">
    <property type="term" value="C:phagocytic vesicle membrane"/>
    <property type="evidence" value="ECO:0007669"/>
    <property type="project" value="UniProtKB-SubCell"/>
</dbReference>
<dbReference type="GO" id="GO:0034045">
    <property type="term" value="C:phagophore assembly site membrane"/>
    <property type="evidence" value="ECO:0000318"/>
    <property type="project" value="GO_Central"/>
</dbReference>
<dbReference type="GO" id="GO:0080025">
    <property type="term" value="F:phosphatidylinositol-3,5-bisphosphate binding"/>
    <property type="evidence" value="ECO:0000314"/>
    <property type="project" value="WormBase"/>
</dbReference>
<dbReference type="GO" id="GO:0032266">
    <property type="term" value="F:phosphatidylinositol-3-phosphate binding"/>
    <property type="evidence" value="ECO:0000314"/>
    <property type="project" value="WormBase"/>
</dbReference>
<dbReference type="GO" id="GO:0070273">
    <property type="term" value="F:phosphatidylinositol-4-phosphate binding"/>
    <property type="evidence" value="ECO:0000314"/>
    <property type="project" value="WormBase"/>
</dbReference>
<dbReference type="GO" id="GO:0010314">
    <property type="term" value="F:phosphatidylinositol-5-phosphate binding"/>
    <property type="evidence" value="ECO:0000314"/>
    <property type="project" value="WormBase"/>
</dbReference>
<dbReference type="GO" id="GO:0030674">
    <property type="term" value="F:protein-macromolecule adaptor activity"/>
    <property type="evidence" value="ECO:0000318"/>
    <property type="project" value="GO_Central"/>
</dbReference>
<dbReference type="GO" id="GO:0043277">
    <property type="term" value="P:apoptotic cell clearance"/>
    <property type="evidence" value="ECO:0000315"/>
    <property type="project" value="WormBase"/>
</dbReference>
<dbReference type="GO" id="GO:0006914">
    <property type="term" value="P:autophagy"/>
    <property type="evidence" value="ECO:0000316"/>
    <property type="project" value="WormBase"/>
</dbReference>
<dbReference type="GO" id="GO:0000422">
    <property type="term" value="P:autophagy of mitochondrion"/>
    <property type="evidence" value="ECO:0000318"/>
    <property type="project" value="GO_Central"/>
</dbReference>
<dbReference type="GO" id="GO:0097237">
    <property type="term" value="P:cellular response to toxic substance"/>
    <property type="evidence" value="ECO:0000315"/>
    <property type="project" value="UniProtKB"/>
</dbReference>
<dbReference type="GO" id="GO:0040024">
    <property type="term" value="P:dauer larval development"/>
    <property type="evidence" value="ECO:0000316"/>
    <property type="project" value="WormBase"/>
</dbReference>
<dbReference type="GO" id="GO:0008340">
    <property type="term" value="P:determination of adult lifespan"/>
    <property type="evidence" value="ECO:0000316"/>
    <property type="project" value="WormBase"/>
</dbReference>
<dbReference type="GO" id="GO:0009792">
    <property type="term" value="P:embryo development ending in birth or egg hatching"/>
    <property type="evidence" value="ECO:0000316"/>
    <property type="project" value="WormBase"/>
</dbReference>
<dbReference type="GO" id="GO:0048598">
    <property type="term" value="P:embryonic morphogenesis"/>
    <property type="evidence" value="ECO:0000316"/>
    <property type="project" value="WormBase"/>
</dbReference>
<dbReference type="GO" id="GO:0036093">
    <property type="term" value="P:germ cell proliferation"/>
    <property type="evidence" value="ECO:0000315"/>
    <property type="project" value="UniProtKB"/>
</dbReference>
<dbReference type="GO" id="GO:0042078">
    <property type="term" value="P:germ-line stem cell division"/>
    <property type="evidence" value="ECO:0000315"/>
    <property type="project" value="UniProtKB"/>
</dbReference>
<dbReference type="GO" id="GO:0061723">
    <property type="term" value="P:glycophagy"/>
    <property type="evidence" value="ECO:0000318"/>
    <property type="project" value="GO_Central"/>
</dbReference>
<dbReference type="GO" id="GO:0044804">
    <property type="term" value="P:nucleophagy"/>
    <property type="evidence" value="ECO:0000318"/>
    <property type="project" value="GO_Central"/>
</dbReference>
<dbReference type="GO" id="GO:0000425">
    <property type="term" value="P:pexophagy"/>
    <property type="evidence" value="ECO:0000318"/>
    <property type="project" value="GO_Central"/>
</dbReference>
<dbReference type="GO" id="GO:0001778">
    <property type="term" value="P:plasma membrane repair"/>
    <property type="evidence" value="ECO:0000315"/>
    <property type="project" value="UniProtKB"/>
</dbReference>
<dbReference type="GO" id="GO:0010508">
    <property type="term" value="P:positive regulation of autophagy"/>
    <property type="evidence" value="ECO:0000315"/>
    <property type="project" value="UniProtKB"/>
</dbReference>
<dbReference type="GO" id="GO:0012501">
    <property type="term" value="P:programmed cell death"/>
    <property type="evidence" value="ECO:0000316"/>
    <property type="project" value="WormBase"/>
</dbReference>
<dbReference type="GO" id="GO:0030163">
    <property type="term" value="P:protein catabolic process"/>
    <property type="evidence" value="ECO:0000315"/>
    <property type="project" value="WormBase"/>
</dbReference>
<dbReference type="GO" id="GO:0034497">
    <property type="term" value="P:protein localization to phagophore assembly site"/>
    <property type="evidence" value="ECO:0000318"/>
    <property type="project" value="GO_Central"/>
</dbReference>
<dbReference type="GO" id="GO:0098792">
    <property type="term" value="P:xenophagy"/>
    <property type="evidence" value="ECO:0000315"/>
    <property type="project" value="UniProtKB"/>
</dbReference>
<dbReference type="FunFam" id="2.130.10.10:FF:001428">
    <property type="entry name" value="Autophagy-related protein 18"/>
    <property type="match status" value="1"/>
</dbReference>
<dbReference type="Gene3D" id="2.130.10.10">
    <property type="entry name" value="YVTN repeat-like/Quinoprotein amine dehydrogenase"/>
    <property type="match status" value="1"/>
</dbReference>
<dbReference type="InterPro" id="IPR048720">
    <property type="entry name" value="PROPPIN"/>
</dbReference>
<dbReference type="InterPro" id="IPR015943">
    <property type="entry name" value="WD40/YVTN_repeat-like_dom_sf"/>
</dbReference>
<dbReference type="InterPro" id="IPR036322">
    <property type="entry name" value="WD40_repeat_dom_sf"/>
</dbReference>
<dbReference type="InterPro" id="IPR001680">
    <property type="entry name" value="WD40_rpt"/>
</dbReference>
<dbReference type="PANTHER" id="PTHR11227">
    <property type="entry name" value="WD-REPEAT PROTEIN INTERACTING WITH PHOSPHOINOSIDES WIPI -RELATED"/>
    <property type="match status" value="1"/>
</dbReference>
<dbReference type="Pfam" id="PF21032">
    <property type="entry name" value="PROPPIN"/>
    <property type="match status" value="1"/>
</dbReference>
<dbReference type="SMART" id="SM00320">
    <property type="entry name" value="WD40"/>
    <property type="match status" value="3"/>
</dbReference>
<dbReference type="SUPFAM" id="SSF50978">
    <property type="entry name" value="WD40 repeat-like"/>
    <property type="match status" value="1"/>
</dbReference>
<gene>
    <name evidence="17" type="primary">atg-18</name>
    <name evidence="17" type="synonym">atgr-18</name>
    <name evidence="17" type="synonym">tag-283</name>
    <name evidence="17" type="ORF">F41E6.13</name>
</gene>
<keyword id="KW-0025">Alternative splicing</keyword>
<keyword id="KW-0072">Autophagy</keyword>
<keyword id="KW-0963">Cytoplasm</keyword>
<keyword id="KW-0968">Cytoplasmic vesicle</keyword>
<keyword id="KW-0446">Lipid-binding</keyword>
<keyword id="KW-0472">Membrane</keyword>
<keyword id="KW-1185">Reference proteome</keyword>
<keyword id="KW-0677">Repeat</keyword>
<keyword id="KW-0853">WD repeat</keyword>
<comment type="function">
    <text evidence="3 4 5 6 7 8 9 10 11 12 13">Component of the autophagy machinery that is recruited to phosphatidylinositols on preautophagosomal structures, which are early autophagic structures, to promote autophagosome formation, and the subsequent degradation and clearance of engulfed apoptotic cells and P-granules in somatic cells (PubMed:12958363, PubMed:19167332, PubMed:21183797, PubMed:21802374, PubMed:22451698, PubMed:25124690, PubMed:28557996). In particular, binds with high affinity to phosphatidylinositols including phosphatidylinositol 3-phosphate (PtdIns(3)P), phosphatidylinositol 4-phosphate (PtdIns(4)P), and phosphatidylinositol 5-phosphate (PtdIns(5)P), and more weakly to phosphatidylinositol 3,5-bisphosphate (PtdIns(3,5)P2) (PubMed:21802374, PubMed:22451698). Plays a role in mitophagy, which is the autophagic consumption of mitochondria, in response to dietary restriction (PubMed:30133321). Involved in xenophagy, the autophagy-mediated degradation of pathogens and pathogen products, such as toxins (PubMed:27875098). Also plays a role in membrane-pore repair (PubMed:27875098). In a daf-18/PTEN- and daf-16/FOXO-dependent manner, required for the proliferation of germ stem cell progenitors in the gonad during the late phases of larval development (PubMed:28285998). By regulating the release of neurotransmitters and neuropeptides, involved in the control of lifespan in response to dietary restriction and daf-2 signaling (PubMed:28557996). Probably through its involvement in autophagy, required for dauer formation (PubMed:12958363).</text>
</comment>
<comment type="subcellular location">
    <subcellularLocation>
        <location evidence="7">Cytoplasmic vesicle</location>
        <location evidence="7">Phagosome membrane</location>
        <topology evidence="15">Peripheral membrane protein</topology>
        <orientation evidence="15">Cytoplasmic side</orientation>
    </subcellularLocation>
    <subcellularLocation>
        <location evidence="8">Cytoplasm</location>
    </subcellularLocation>
    <text evidence="7">Partially localizes to the phagosome membrane of engulfed apoptotic cells.</text>
</comment>
<comment type="alternative products">
    <event type="alternative splicing"/>
    <isoform>
        <id>O16466-1</id>
        <name evidence="17">a</name>
        <sequence type="displayed"/>
    </isoform>
    <isoform>
        <id>O16466-2</id>
        <name evidence="18">b</name>
        <sequence type="described" ref="VSP_060114 VSP_060115"/>
    </isoform>
</comment>
<comment type="tissue specificity">
    <text evidence="11">Expressed in neurons and intestinal cells.</text>
</comment>
<comment type="domain">
    <text evidence="6 7">The L/FRRG motif is required for recruitment to phosphatidylinositols including phosphatidylinositol 3-phosphate (PtdIns(3)P), phosphatidylinositol 4-phosphate (PtdIns(4)P), phosphatidylinositol 5-phosphate (PtdIns(5)P), and phosphatidylinositol 3,5-bisphosphate (PtdIns(3,5)P2).</text>
</comment>
<comment type="disruption phenotype">
    <text evidence="3 5 9 10">RNAi-mediated knockdown results in defective clearance of engulfed apoptotic cells (PubMed:21183797). RNAi-mediated knockdown reduces autophagic degradation of membrane pore-forming toxin Cry5B (PubMed:27875098). RNAi-mediated knockdown results in reduced germ stem cell proliferation during larval development (PubMed:28285998). RNAi-mediated knockdown causes abnormalities in constitutive dauer formation in daf-2 e1370 mutant including a lack of autophagosome formation (PubMed:12958363).</text>
</comment>
<comment type="similarity">
    <text evidence="14">Belongs to the WD repeat PROPPIN family.</text>
</comment>
<accession>O16466</accession>
<accession>H2KYN5</accession>
<reference evidence="16" key="1">
    <citation type="journal article" date="1998" name="Science">
        <title>Genome sequence of the nematode C. elegans: a platform for investigating biology.</title>
        <authorList>
            <consortium name="The C. elegans sequencing consortium"/>
        </authorList>
    </citation>
    <scope>NUCLEOTIDE SEQUENCE [LARGE SCALE GENOMIC DNA]</scope>
    <source>
        <strain evidence="16">Bristol N2</strain>
    </source>
</reference>
<reference evidence="14" key="2">
    <citation type="journal article" date="2003" name="Science">
        <title>Autophagy genes are essential for dauer development and life-span extension in C. elegans.</title>
        <authorList>
            <person name="Melendez A."/>
            <person name="Talloczy Z."/>
            <person name="Seaman M."/>
            <person name="Eskelinen E.L."/>
            <person name="Hall D.H."/>
            <person name="Levine B."/>
        </authorList>
    </citation>
    <scope>FUNCTION</scope>
    <scope>DISRUPTION PHENOTYPE</scope>
</reference>
<reference evidence="14" key="3">
    <citation type="journal article" date="2009" name="Cell">
        <title>SEPA-1 mediates the specific recognition and degradation of P granule components by autophagy in C. elegans.</title>
        <authorList>
            <person name="Zhang Y."/>
            <person name="Yan L."/>
            <person name="Zhou Z."/>
            <person name="Yang P."/>
            <person name="Tian E."/>
            <person name="Zhang K."/>
            <person name="Zhao Y."/>
            <person name="Li Z."/>
            <person name="Song B."/>
            <person name="Han J."/>
            <person name="Miao L."/>
            <person name="Zhang H."/>
        </authorList>
    </citation>
    <scope>FUNCTION</scope>
</reference>
<reference evidence="14" key="4">
    <citation type="journal article" date="2011" name="Autophagy">
        <title>The Atg6/Vps30/Beclin 1 ortholog BEC-1 mediates endocytic retrograde transport in addition to autophagy in C. elegans.</title>
        <authorList>
            <person name="Ruck A."/>
            <person name="Attonito J."/>
            <person name="Garces K.T."/>
            <person name="Nunez L."/>
            <person name="Palmisano N.J."/>
            <person name="Rubel Z."/>
            <person name="Bai Z."/>
            <person name="Nguyen K.C."/>
            <person name="Sun L."/>
            <person name="Grant B.D."/>
            <person name="Hall D.H."/>
            <person name="Melendez A."/>
        </authorList>
    </citation>
    <scope>FUNCTION</scope>
    <scope>DISRUPTION PHENOTYPE</scope>
</reference>
<reference evidence="14" key="5">
    <citation type="journal article" date="2011" name="Dev. Cell">
        <title>The WD40 repeat PtdIns(3)P-binding protein EPG-6 regulates progression of omegasomes to autophagosomes.</title>
        <authorList>
            <person name="Lu Q."/>
            <person name="Yang P."/>
            <person name="Huang X."/>
            <person name="Hu W."/>
            <person name="Guo B."/>
            <person name="Wu F."/>
            <person name="Lin L."/>
            <person name="Kovacs A.L."/>
            <person name="Yu L."/>
            <person name="Zhang H."/>
        </authorList>
    </citation>
    <scope>FUNCTION</scope>
    <scope>DOMAIN</scope>
    <scope>MUTAGENESIS OF 228-ARG-ARG-229</scope>
</reference>
<reference evidence="14" key="6">
    <citation type="journal article" date="2012" name="J. Cell Biol.">
        <title>Autophagy genes function sequentially to promote apoptotic cell corpse degradation in the engulfing cell.</title>
        <authorList>
            <person name="Li W."/>
            <person name="Zou W."/>
            <person name="Yang Y."/>
            <person name="Chai Y."/>
            <person name="Chen B."/>
            <person name="Cheng S."/>
            <person name="Tian D."/>
            <person name="Wang X."/>
            <person name="Vale R.D."/>
            <person name="Ou G."/>
        </authorList>
    </citation>
    <scope>FUNCTION</scope>
    <scope>SUBCELLULAR LOCATION</scope>
    <scope>TOPOLOGY</scope>
    <scope>DOMAIN</scope>
    <scope>MUTAGENESIS OF 228-ARG-ARG-229</scope>
</reference>
<reference evidence="14" key="7">
    <citation type="journal article" date="2014" name="EMBO Rep.">
        <title>PI3P phosphatase activity is required for autophagosome maturation and autolysosome formation.</title>
        <authorList>
            <person name="Wu Y."/>
            <person name="Cheng S."/>
            <person name="Zhao H."/>
            <person name="Zou W."/>
            <person name="Yoshina S."/>
            <person name="Mitani S."/>
            <person name="Zhang H."/>
            <person name="Wang X."/>
        </authorList>
    </citation>
    <scope>FUNCTION</scope>
    <scope>SUBCELLULAR LOCATION</scope>
</reference>
<reference key="8">
    <citation type="journal article" date="2017" name="Autophagy">
        <title>HLH-30/TFEB-mediated autophagy functions in a cell-autonomous manner for epithelium intrinsic cellular defense against bacterial pore-forming toxin in C. elegans.</title>
        <authorList>
            <person name="Chen H.D."/>
            <person name="Kao C.Y."/>
            <person name="Liu B.Y."/>
            <person name="Huang S.W."/>
            <person name="Kuo C.J."/>
            <person name="Ruan J.W."/>
            <person name="Lin Y.H."/>
            <person name="Huang C.R."/>
            <person name="Chen Y.H."/>
            <person name="Wang H.D."/>
            <person name="Aroian R.V."/>
            <person name="Chen C.S."/>
        </authorList>
    </citation>
    <scope>FUNCTION</scope>
    <scope>DISRUPTION PHENOTYPE</scope>
</reference>
<reference evidence="14" key="9">
    <citation type="journal article" date="2017" name="Curr. Biol.">
        <title>A Non-Cell-Autonomous Role of BEC-1/BECN1/Beclin1 in Coordinating Cell-Cycle Progression and Stem Cell Proliferation during Germline Development.</title>
        <authorList>
            <person name="Ames K."/>
            <person name="Da Cunha D.S."/>
            <person name="Gonzalez B."/>
            <person name="Konta M."/>
            <person name="Lin F."/>
            <person name="Shechter G."/>
            <person name="Starikov L."/>
            <person name="Wong S."/>
            <person name="Buelow H.E."/>
            <person name="Melendez A."/>
        </authorList>
    </citation>
    <scope>FUNCTION</scope>
    <scope>DISRUPTION PHENOTYPE</scope>
</reference>
<reference evidence="14" key="10">
    <citation type="journal article" date="2017" name="PLoS Genet.">
        <title>The cell non-autonomous function of ATG-18 is essential for neuroendocrine regulation of Caenorhabditis elegans lifespan.</title>
        <authorList>
            <person name="Minnerly J."/>
            <person name="Zhang J."/>
            <person name="Parker T."/>
            <person name="Kaul T."/>
            <person name="Jia K."/>
        </authorList>
    </citation>
    <scope>FUNCTION</scope>
    <scope>TISSUE SPECIFICITY</scope>
</reference>
<reference evidence="14" key="11">
    <citation type="journal article" date="2018" name="Am. J. Physiol.">
        <title>Non-selective autophagy reduces mitochondrial content during starvation in Caenorhabditis elegans.</title>
        <authorList>
            <person name="Hibshman J.D."/>
            <person name="Leuthner T.C."/>
            <person name="Shoben C."/>
            <person name="Mello D.F."/>
            <person name="Sherwood D.R."/>
            <person name="Meyer J.N."/>
            <person name="Baugh L.R."/>
        </authorList>
    </citation>
    <scope>FUNCTION</scope>
</reference>
<proteinExistence type="evidence at protein level"/>
<feature type="chain" id="PRO_0000446904" description="Autophagy-related protein 18">
    <location>
        <begin position="1"/>
        <end position="412"/>
    </location>
</feature>
<feature type="repeat" description="WD 1" evidence="1">
    <location>
        <begin position="100"/>
        <end position="139"/>
    </location>
</feature>
<feature type="repeat" description="WD 2" evidence="1">
    <location>
        <begin position="142"/>
        <end position="183"/>
    </location>
</feature>
<feature type="repeat" description="WD 3" evidence="1">
    <location>
        <begin position="186"/>
        <end position="226"/>
    </location>
</feature>
<feature type="repeat" description="WD 4" evidence="1">
    <location>
        <begin position="232"/>
        <end position="271"/>
    </location>
</feature>
<feature type="region of interest" description="Disordered" evidence="2">
    <location>
        <begin position="363"/>
        <end position="412"/>
    </location>
</feature>
<feature type="short sequence motif" description="L/FRRG motif" evidence="6 7">
    <location>
        <begin position="227"/>
        <end position="230"/>
    </location>
</feature>
<feature type="compositionally biased region" description="Low complexity" evidence="2">
    <location>
        <begin position="372"/>
        <end position="391"/>
    </location>
</feature>
<feature type="splice variant" id="VSP_060114" description="In isoform b." evidence="14">
    <original>NQS</original>
    <variation>ISV</variation>
    <location>
        <begin position="392"/>
        <end position="394"/>
    </location>
</feature>
<feature type="splice variant" id="VSP_060115" description="In isoform b." evidence="14">
    <location>
        <begin position="395"/>
        <end position="412"/>
    </location>
</feature>
<feature type="mutagenesis site" description="Abolishes phosphatidylinositol binding. Abolishes recruitment to phagosome membrane. Does not rescue the apoptotic corpse degradation defect of the atg-18 gk378 mutant." evidence="6 7">
    <original>RR</original>
    <variation>KK</variation>
    <location>
        <begin position="228"/>
        <end position="229"/>
    </location>
</feature>
<feature type="mutagenesis site" description="Abolishes phosphatidylinositol binding." evidence="6">
    <original>RR</original>
    <variation>TT</variation>
    <location>
        <begin position="228"/>
        <end position="229"/>
    </location>
</feature>
<sequence>MSATTSEENPDSINYIGFNQDSKVICVGHKDGYMFYKTADILENNTLTYEGENLTHLGLNNCLIIERLFSSALMVVISQKDPRVLHVYHFTSRNIICDHRFNKSVLTVRLNRDRIVVCLEDCIYIYNLKDMKMMHNIMDTPTNKLGVLDLTSNPGNALIAYPGSTDTGSVHLFDAINLSSVSTFNAHEGTIACLKFNQEGNMIATASTKGTVIRVYSVPNGHRLFEFRRGVTRCVNIYSLCFSSDSKYLTSSSNTETVHVFKLEKTEGVDNKPEASTEGGGWFDAINKTFSAYMPSQVLQVGELMTTERSFATAKLPGAARSNQVSLVSHKNQQYVMAATSDGFVYAYRLDPEGGELDLIKQHNIGPKSDTSRASPTSTGSGGAAKSAEASNQSVPNMDDPDDFPPMSHTSG</sequence>
<protein>
    <recommendedName>
        <fullName evidence="14">Autophagy-related protein 18</fullName>
    </recommendedName>
</protein>
<name>ATG18_CAEEL</name>